<dbReference type="EMBL" id="AY673996">
    <property type="protein sequence ID" value="AAT79720.1"/>
    <property type="molecule type" value="Genomic_DNA"/>
</dbReference>
<dbReference type="RefSeq" id="YP_063645.1">
    <property type="nucleotide sequence ID" value="NC_006137.1"/>
</dbReference>
<dbReference type="SMR" id="Q6B8R5"/>
<dbReference type="GeneID" id="2944056"/>
<dbReference type="GO" id="GO:0009507">
    <property type="term" value="C:chloroplast"/>
    <property type="evidence" value="ECO:0007669"/>
    <property type="project" value="UniProtKB-SubCell"/>
</dbReference>
<dbReference type="GO" id="GO:0005763">
    <property type="term" value="C:mitochondrial small ribosomal subunit"/>
    <property type="evidence" value="ECO:0007669"/>
    <property type="project" value="TreeGrafter"/>
</dbReference>
<dbReference type="GO" id="GO:0003735">
    <property type="term" value="F:structural constituent of ribosome"/>
    <property type="evidence" value="ECO:0007669"/>
    <property type="project" value="InterPro"/>
</dbReference>
<dbReference type="GO" id="GO:0006412">
    <property type="term" value="P:translation"/>
    <property type="evidence" value="ECO:0007669"/>
    <property type="project" value="UniProtKB-UniRule"/>
</dbReference>
<dbReference type="CDD" id="cd01425">
    <property type="entry name" value="RPS2"/>
    <property type="match status" value="1"/>
</dbReference>
<dbReference type="FunFam" id="1.10.287.610:FF:000001">
    <property type="entry name" value="30S ribosomal protein S2"/>
    <property type="match status" value="1"/>
</dbReference>
<dbReference type="Gene3D" id="3.40.50.10490">
    <property type="entry name" value="Glucose-6-phosphate isomerase like protein, domain 1"/>
    <property type="match status" value="1"/>
</dbReference>
<dbReference type="Gene3D" id="1.10.287.610">
    <property type="entry name" value="Helix hairpin bin"/>
    <property type="match status" value="1"/>
</dbReference>
<dbReference type="HAMAP" id="MF_00291_B">
    <property type="entry name" value="Ribosomal_uS2_B"/>
    <property type="match status" value="1"/>
</dbReference>
<dbReference type="InterPro" id="IPR001865">
    <property type="entry name" value="Ribosomal_uS2"/>
</dbReference>
<dbReference type="InterPro" id="IPR005706">
    <property type="entry name" value="Ribosomal_uS2_bac/mit/plastid"/>
</dbReference>
<dbReference type="InterPro" id="IPR018130">
    <property type="entry name" value="Ribosomal_uS2_CS"/>
</dbReference>
<dbReference type="InterPro" id="IPR023591">
    <property type="entry name" value="Ribosomal_uS2_flav_dom_sf"/>
</dbReference>
<dbReference type="NCBIfam" id="TIGR01011">
    <property type="entry name" value="rpsB_bact"/>
    <property type="match status" value="1"/>
</dbReference>
<dbReference type="PANTHER" id="PTHR12534">
    <property type="entry name" value="30S RIBOSOMAL PROTEIN S2 PROKARYOTIC AND ORGANELLAR"/>
    <property type="match status" value="1"/>
</dbReference>
<dbReference type="PANTHER" id="PTHR12534:SF0">
    <property type="entry name" value="SMALL RIBOSOMAL SUBUNIT PROTEIN US2M"/>
    <property type="match status" value="1"/>
</dbReference>
<dbReference type="Pfam" id="PF00318">
    <property type="entry name" value="Ribosomal_S2"/>
    <property type="match status" value="1"/>
</dbReference>
<dbReference type="PRINTS" id="PR00395">
    <property type="entry name" value="RIBOSOMALS2"/>
</dbReference>
<dbReference type="SUPFAM" id="SSF52313">
    <property type="entry name" value="Ribosomal protein S2"/>
    <property type="match status" value="1"/>
</dbReference>
<dbReference type="PROSITE" id="PS00962">
    <property type="entry name" value="RIBOSOMAL_S2_1"/>
    <property type="match status" value="1"/>
</dbReference>
<dbReference type="PROSITE" id="PS00963">
    <property type="entry name" value="RIBOSOMAL_S2_2"/>
    <property type="match status" value="1"/>
</dbReference>
<comment type="subcellular location">
    <subcellularLocation>
        <location>Plastid</location>
        <location>Chloroplast</location>
    </subcellularLocation>
</comment>
<comment type="similarity">
    <text evidence="1">Belongs to the universal ribosomal protein uS2 family.</text>
</comment>
<name>RR2_GRATL</name>
<evidence type="ECO:0000305" key="1"/>
<accession>Q6B8R5</accession>
<keyword id="KW-0150">Chloroplast</keyword>
<keyword id="KW-0934">Plastid</keyword>
<keyword id="KW-0687">Ribonucleoprotein</keyword>
<keyword id="KW-0689">Ribosomal protein</keyword>
<organism>
    <name type="scientific">Gracilaria tenuistipitata var. liui</name>
    <name type="common">Red alga</name>
    <dbReference type="NCBI Taxonomy" id="285951"/>
    <lineage>
        <taxon>Eukaryota</taxon>
        <taxon>Rhodophyta</taxon>
        <taxon>Florideophyceae</taxon>
        <taxon>Rhodymeniophycidae</taxon>
        <taxon>Gracilariales</taxon>
        <taxon>Gracilariaceae</taxon>
        <taxon>Gracilaria</taxon>
        <taxon>Gracilaria tenuistipitata</taxon>
    </lineage>
</organism>
<feature type="chain" id="PRO_0000134297" description="Small ribosomal subunit protein uS2c">
    <location>
        <begin position="1"/>
        <end position="231"/>
    </location>
</feature>
<sequence length="231" mass="26309">MSIVSLSELLEAGAHFGHQARRWNPRMFPYIYTERNGIHIIDLVQTAQLLTEACQFIRDASQEGKKFLFLGTKRQAAGVIAEQAIRSNSYYVNQRWLGGMLTNWMTIKSRVERLQRLEMDEQAGLIDMLPKKEAAINRRELDKLRKNLNGIKNMSRLPDFIVVVDQKRETTAIQECIKLGIPIICILDTNCNPEIIDIPIPANDDAIRSIKLIISRIADSIIEGSTYALNK</sequence>
<protein>
    <recommendedName>
        <fullName evidence="1">Small ribosomal subunit protein uS2c</fullName>
    </recommendedName>
    <alternativeName>
        <fullName>30S ribosomal protein S2, chloroplastic</fullName>
    </alternativeName>
</protein>
<reference key="1">
    <citation type="journal article" date="2004" name="J. Mol. Evol.">
        <title>Comparative analysis of the complete plastid genome sequence of the red alga Gracilaria tenuistipitata var. liui provides insights into the evolution of rhodoplasts and their relationship to other plastids.</title>
        <authorList>
            <person name="Hagopian J.C."/>
            <person name="Reis M."/>
            <person name="Kitajima J.P."/>
            <person name="Bhattacharya D."/>
            <person name="de Oliveira M.C."/>
        </authorList>
    </citation>
    <scope>NUCLEOTIDE SEQUENCE [LARGE SCALE GENOMIC DNA]</scope>
</reference>
<proteinExistence type="inferred from homology"/>
<geneLocation type="chloroplast"/>
<gene>
    <name type="primary">rps2</name>
    <name type="ordered locus">Grc000139</name>
</gene>